<gene>
    <name evidence="1" type="primary">flgH</name>
    <name type="ordered locus">Reut_B5631</name>
</gene>
<name>FLGH_CUPPJ</name>
<keyword id="KW-0975">Bacterial flagellum</keyword>
<keyword id="KW-0998">Cell outer membrane</keyword>
<keyword id="KW-0449">Lipoprotein</keyword>
<keyword id="KW-0472">Membrane</keyword>
<keyword id="KW-0564">Palmitate</keyword>
<keyword id="KW-0732">Signal</keyword>
<evidence type="ECO:0000255" key="1">
    <source>
        <dbReference type="HAMAP-Rule" id="MF_00415"/>
    </source>
</evidence>
<evidence type="ECO:0000305" key="2"/>
<proteinExistence type="inferred from homology"/>
<sequence length="229" mass="23831">MLSRLGARVLYCLAGLALLASGGCALMPREPLVQLPTTARAEPRPMGPATGSIFASSYAGNPLFEDRRPRNVGDILTIVITENVNATKNSGTNASRTGSTSMAFDAVPKALAGLFSSSSNASINGANALKASGGASAANTFNGTITVTVLEVLANGNLVVSGEKQLAINQGAEFIRFSGVVNPRTITGDNGVLSTQVADARIEYTAKGYIDEAQNMGWLQRFFLNVSPF</sequence>
<reference key="1">
    <citation type="journal article" date="2010" name="PLoS ONE">
        <title>The complete multipartite genome sequence of Cupriavidus necator JMP134, a versatile pollutant degrader.</title>
        <authorList>
            <person name="Lykidis A."/>
            <person name="Perez-Pantoja D."/>
            <person name="Ledger T."/>
            <person name="Mavromatis K."/>
            <person name="Anderson I.J."/>
            <person name="Ivanova N.N."/>
            <person name="Hooper S.D."/>
            <person name="Lapidus A."/>
            <person name="Lucas S."/>
            <person name="Gonzalez B."/>
            <person name="Kyrpides N.C."/>
        </authorList>
    </citation>
    <scope>NUCLEOTIDE SEQUENCE [LARGE SCALE GENOMIC DNA]</scope>
    <source>
        <strain>JMP134 / LMG 1197</strain>
    </source>
</reference>
<dbReference type="EMBL" id="CP000091">
    <property type="protein sequence ID" value="AAZ64976.1"/>
    <property type="status" value="ALT_INIT"/>
    <property type="molecule type" value="Genomic_DNA"/>
</dbReference>
<dbReference type="SMR" id="Q46PF8"/>
<dbReference type="STRING" id="264198.Reut_B5631"/>
<dbReference type="DNASU" id="3613158"/>
<dbReference type="KEGG" id="reu:Reut_B5631"/>
<dbReference type="eggNOG" id="COG2063">
    <property type="taxonomic scope" value="Bacteria"/>
</dbReference>
<dbReference type="HOGENOM" id="CLU_069313_0_0_4"/>
<dbReference type="GO" id="GO:0009427">
    <property type="term" value="C:bacterial-type flagellum basal body, distal rod, L ring"/>
    <property type="evidence" value="ECO:0007669"/>
    <property type="project" value="InterPro"/>
</dbReference>
<dbReference type="GO" id="GO:0009279">
    <property type="term" value="C:cell outer membrane"/>
    <property type="evidence" value="ECO:0007669"/>
    <property type="project" value="UniProtKB-SubCell"/>
</dbReference>
<dbReference type="GO" id="GO:0003774">
    <property type="term" value="F:cytoskeletal motor activity"/>
    <property type="evidence" value="ECO:0007669"/>
    <property type="project" value="InterPro"/>
</dbReference>
<dbReference type="GO" id="GO:0071973">
    <property type="term" value="P:bacterial-type flagellum-dependent cell motility"/>
    <property type="evidence" value="ECO:0007669"/>
    <property type="project" value="InterPro"/>
</dbReference>
<dbReference type="HAMAP" id="MF_00415">
    <property type="entry name" value="FlgH"/>
    <property type="match status" value="1"/>
</dbReference>
<dbReference type="InterPro" id="IPR000527">
    <property type="entry name" value="Flag_Lring"/>
</dbReference>
<dbReference type="NCBIfam" id="NF009337">
    <property type="entry name" value="PRK12697.1"/>
    <property type="match status" value="1"/>
</dbReference>
<dbReference type="PANTHER" id="PTHR34933">
    <property type="entry name" value="FLAGELLAR L-RING PROTEIN"/>
    <property type="match status" value="1"/>
</dbReference>
<dbReference type="PANTHER" id="PTHR34933:SF3">
    <property type="entry name" value="FLAGELLAR L-RING PROTEIN"/>
    <property type="match status" value="1"/>
</dbReference>
<dbReference type="Pfam" id="PF02107">
    <property type="entry name" value="FlgH"/>
    <property type="match status" value="1"/>
</dbReference>
<dbReference type="PRINTS" id="PR01008">
    <property type="entry name" value="FLGLRINGFLGH"/>
</dbReference>
<dbReference type="PROSITE" id="PS51257">
    <property type="entry name" value="PROKAR_LIPOPROTEIN"/>
    <property type="match status" value="1"/>
</dbReference>
<feature type="signal peptide" evidence="1">
    <location>
        <begin position="1"/>
        <end position="23"/>
    </location>
</feature>
<feature type="chain" id="PRO_0000236832" description="Flagellar L-ring protein">
    <location>
        <begin position="24"/>
        <end position="229"/>
    </location>
</feature>
<feature type="lipid moiety-binding region" description="N-palmitoyl cysteine" evidence="1">
    <location>
        <position position="24"/>
    </location>
</feature>
<feature type="lipid moiety-binding region" description="S-diacylglycerol cysteine" evidence="1">
    <location>
        <position position="24"/>
    </location>
</feature>
<comment type="function">
    <text evidence="1">Assembles around the rod to form the L-ring and probably protects the motor/basal body from shearing forces during rotation.</text>
</comment>
<comment type="subunit">
    <text evidence="1">The basal body constitutes a major portion of the flagellar organelle and consists of four rings (L,P,S, and M) mounted on a central rod.</text>
</comment>
<comment type="subcellular location">
    <subcellularLocation>
        <location evidence="1">Cell outer membrane</location>
        <topology evidence="1">Lipid-anchor</topology>
    </subcellularLocation>
    <subcellularLocation>
        <location evidence="1">Bacterial flagellum basal body</location>
    </subcellularLocation>
</comment>
<comment type="similarity">
    <text evidence="1">Belongs to the FlgH family.</text>
</comment>
<comment type="sequence caution" evidence="2">
    <conflict type="erroneous initiation">
        <sequence resource="EMBL-CDS" id="AAZ64976"/>
    </conflict>
</comment>
<accession>Q46PF8</accession>
<organism>
    <name type="scientific">Cupriavidus pinatubonensis (strain JMP 134 / LMG 1197)</name>
    <name type="common">Cupriavidus necator (strain JMP 134)</name>
    <dbReference type="NCBI Taxonomy" id="264198"/>
    <lineage>
        <taxon>Bacteria</taxon>
        <taxon>Pseudomonadati</taxon>
        <taxon>Pseudomonadota</taxon>
        <taxon>Betaproteobacteria</taxon>
        <taxon>Burkholderiales</taxon>
        <taxon>Burkholderiaceae</taxon>
        <taxon>Cupriavidus</taxon>
    </lineage>
</organism>
<protein>
    <recommendedName>
        <fullName evidence="1">Flagellar L-ring protein</fullName>
    </recommendedName>
    <alternativeName>
        <fullName evidence="1">Basal body L-ring protein</fullName>
    </alternativeName>
</protein>